<comment type="function">
    <text evidence="1">Succinyl-CoA synthetase functions in the citric acid cycle (TCA), coupling the hydrolysis of succinyl-CoA to the synthesis of either ATP or GTP and thus represents the only step of substrate-level phosphorylation in the TCA. The beta subunit provides nucleotide specificity of the enzyme and binds the substrate succinate, while the binding sites for coenzyme A and phosphate are found in the alpha subunit.</text>
</comment>
<comment type="catalytic activity">
    <reaction evidence="1">
        <text>succinate + ATP + CoA = succinyl-CoA + ADP + phosphate</text>
        <dbReference type="Rhea" id="RHEA:17661"/>
        <dbReference type="ChEBI" id="CHEBI:30031"/>
        <dbReference type="ChEBI" id="CHEBI:30616"/>
        <dbReference type="ChEBI" id="CHEBI:43474"/>
        <dbReference type="ChEBI" id="CHEBI:57287"/>
        <dbReference type="ChEBI" id="CHEBI:57292"/>
        <dbReference type="ChEBI" id="CHEBI:456216"/>
        <dbReference type="EC" id="6.2.1.5"/>
    </reaction>
    <physiologicalReaction direction="right-to-left" evidence="1">
        <dbReference type="Rhea" id="RHEA:17663"/>
    </physiologicalReaction>
</comment>
<comment type="catalytic activity">
    <reaction evidence="1">
        <text>GTP + succinate + CoA = succinyl-CoA + GDP + phosphate</text>
        <dbReference type="Rhea" id="RHEA:22120"/>
        <dbReference type="ChEBI" id="CHEBI:30031"/>
        <dbReference type="ChEBI" id="CHEBI:37565"/>
        <dbReference type="ChEBI" id="CHEBI:43474"/>
        <dbReference type="ChEBI" id="CHEBI:57287"/>
        <dbReference type="ChEBI" id="CHEBI:57292"/>
        <dbReference type="ChEBI" id="CHEBI:58189"/>
    </reaction>
    <physiologicalReaction direction="right-to-left" evidence="1">
        <dbReference type="Rhea" id="RHEA:22122"/>
    </physiologicalReaction>
</comment>
<comment type="cofactor">
    <cofactor evidence="1">
        <name>Mg(2+)</name>
        <dbReference type="ChEBI" id="CHEBI:18420"/>
    </cofactor>
    <text evidence="1">Binds 1 Mg(2+) ion per subunit.</text>
</comment>
<comment type="pathway">
    <text evidence="1">Carbohydrate metabolism; tricarboxylic acid cycle; succinate from succinyl-CoA (ligase route): step 1/1.</text>
</comment>
<comment type="subunit">
    <text evidence="1">Heterotetramer of two alpha and two beta subunits.</text>
</comment>
<comment type="similarity">
    <text evidence="1">Belongs to the succinate/malate CoA ligase beta subunit family.</text>
</comment>
<dbReference type="EC" id="6.2.1.5" evidence="1"/>
<dbReference type="EMBL" id="CP001191">
    <property type="protein sequence ID" value="ACI56947.1"/>
    <property type="molecule type" value="Genomic_DNA"/>
</dbReference>
<dbReference type="RefSeq" id="WP_012559211.1">
    <property type="nucleotide sequence ID" value="NC_011369.1"/>
</dbReference>
<dbReference type="SMR" id="B5ZSR9"/>
<dbReference type="STRING" id="395492.Rleg2_3684"/>
<dbReference type="KEGG" id="rlt:Rleg2_3684"/>
<dbReference type="eggNOG" id="COG0045">
    <property type="taxonomic scope" value="Bacteria"/>
</dbReference>
<dbReference type="HOGENOM" id="CLU_037430_0_2_5"/>
<dbReference type="UniPathway" id="UPA00223">
    <property type="reaction ID" value="UER00999"/>
</dbReference>
<dbReference type="Proteomes" id="UP000008330">
    <property type="component" value="Chromosome"/>
</dbReference>
<dbReference type="GO" id="GO:0005829">
    <property type="term" value="C:cytosol"/>
    <property type="evidence" value="ECO:0007669"/>
    <property type="project" value="TreeGrafter"/>
</dbReference>
<dbReference type="GO" id="GO:0042709">
    <property type="term" value="C:succinate-CoA ligase complex"/>
    <property type="evidence" value="ECO:0007669"/>
    <property type="project" value="TreeGrafter"/>
</dbReference>
<dbReference type="GO" id="GO:0005524">
    <property type="term" value="F:ATP binding"/>
    <property type="evidence" value="ECO:0007669"/>
    <property type="project" value="UniProtKB-UniRule"/>
</dbReference>
<dbReference type="GO" id="GO:0000287">
    <property type="term" value="F:magnesium ion binding"/>
    <property type="evidence" value="ECO:0007669"/>
    <property type="project" value="UniProtKB-UniRule"/>
</dbReference>
<dbReference type="GO" id="GO:0004775">
    <property type="term" value="F:succinate-CoA ligase (ADP-forming) activity"/>
    <property type="evidence" value="ECO:0007669"/>
    <property type="project" value="UniProtKB-UniRule"/>
</dbReference>
<dbReference type="GO" id="GO:0004776">
    <property type="term" value="F:succinate-CoA ligase (GDP-forming) activity"/>
    <property type="evidence" value="ECO:0007669"/>
    <property type="project" value="RHEA"/>
</dbReference>
<dbReference type="GO" id="GO:0006104">
    <property type="term" value="P:succinyl-CoA metabolic process"/>
    <property type="evidence" value="ECO:0007669"/>
    <property type="project" value="TreeGrafter"/>
</dbReference>
<dbReference type="GO" id="GO:0006099">
    <property type="term" value="P:tricarboxylic acid cycle"/>
    <property type="evidence" value="ECO:0007669"/>
    <property type="project" value="UniProtKB-UniRule"/>
</dbReference>
<dbReference type="FunFam" id="3.30.1490.20:FF:000002">
    <property type="entry name" value="Succinate--CoA ligase [ADP-forming] subunit beta"/>
    <property type="match status" value="1"/>
</dbReference>
<dbReference type="FunFam" id="3.30.470.20:FF:000002">
    <property type="entry name" value="Succinate--CoA ligase [ADP-forming] subunit beta"/>
    <property type="match status" value="1"/>
</dbReference>
<dbReference type="FunFam" id="3.40.50.261:FF:000001">
    <property type="entry name" value="Succinate--CoA ligase [ADP-forming] subunit beta"/>
    <property type="match status" value="1"/>
</dbReference>
<dbReference type="Gene3D" id="3.30.1490.20">
    <property type="entry name" value="ATP-grasp fold, A domain"/>
    <property type="match status" value="1"/>
</dbReference>
<dbReference type="Gene3D" id="3.30.470.20">
    <property type="entry name" value="ATP-grasp fold, B domain"/>
    <property type="match status" value="1"/>
</dbReference>
<dbReference type="Gene3D" id="3.40.50.261">
    <property type="entry name" value="Succinyl-CoA synthetase domains"/>
    <property type="match status" value="1"/>
</dbReference>
<dbReference type="HAMAP" id="MF_00558">
    <property type="entry name" value="Succ_CoA_beta"/>
    <property type="match status" value="1"/>
</dbReference>
<dbReference type="InterPro" id="IPR011761">
    <property type="entry name" value="ATP-grasp"/>
</dbReference>
<dbReference type="InterPro" id="IPR013650">
    <property type="entry name" value="ATP-grasp_succ-CoA_synth-type"/>
</dbReference>
<dbReference type="InterPro" id="IPR013815">
    <property type="entry name" value="ATP_grasp_subdomain_1"/>
</dbReference>
<dbReference type="InterPro" id="IPR017866">
    <property type="entry name" value="Succ-CoA_synthase_bsu_CS"/>
</dbReference>
<dbReference type="InterPro" id="IPR005811">
    <property type="entry name" value="SUCC_ACL_C"/>
</dbReference>
<dbReference type="InterPro" id="IPR005809">
    <property type="entry name" value="Succ_CoA_ligase-like_bsu"/>
</dbReference>
<dbReference type="InterPro" id="IPR016102">
    <property type="entry name" value="Succinyl-CoA_synth-like"/>
</dbReference>
<dbReference type="NCBIfam" id="NF001913">
    <property type="entry name" value="PRK00696.1"/>
    <property type="match status" value="1"/>
</dbReference>
<dbReference type="NCBIfam" id="TIGR01016">
    <property type="entry name" value="sucCoAbeta"/>
    <property type="match status" value="1"/>
</dbReference>
<dbReference type="PANTHER" id="PTHR11815:SF10">
    <property type="entry name" value="SUCCINATE--COA LIGASE [GDP-FORMING] SUBUNIT BETA, MITOCHONDRIAL"/>
    <property type="match status" value="1"/>
</dbReference>
<dbReference type="PANTHER" id="PTHR11815">
    <property type="entry name" value="SUCCINYL-COA SYNTHETASE BETA CHAIN"/>
    <property type="match status" value="1"/>
</dbReference>
<dbReference type="Pfam" id="PF08442">
    <property type="entry name" value="ATP-grasp_2"/>
    <property type="match status" value="1"/>
</dbReference>
<dbReference type="Pfam" id="PF00549">
    <property type="entry name" value="Ligase_CoA"/>
    <property type="match status" value="1"/>
</dbReference>
<dbReference type="PIRSF" id="PIRSF001554">
    <property type="entry name" value="SucCS_beta"/>
    <property type="match status" value="1"/>
</dbReference>
<dbReference type="SUPFAM" id="SSF56059">
    <property type="entry name" value="Glutathione synthetase ATP-binding domain-like"/>
    <property type="match status" value="1"/>
</dbReference>
<dbReference type="SUPFAM" id="SSF52210">
    <property type="entry name" value="Succinyl-CoA synthetase domains"/>
    <property type="match status" value="1"/>
</dbReference>
<dbReference type="PROSITE" id="PS50975">
    <property type="entry name" value="ATP_GRASP"/>
    <property type="match status" value="1"/>
</dbReference>
<dbReference type="PROSITE" id="PS01217">
    <property type="entry name" value="SUCCINYL_COA_LIG_3"/>
    <property type="match status" value="1"/>
</dbReference>
<gene>
    <name evidence="1" type="primary">sucC</name>
    <name type="ordered locus">Rleg2_3684</name>
</gene>
<evidence type="ECO:0000255" key="1">
    <source>
        <dbReference type="HAMAP-Rule" id="MF_00558"/>
    </source>
</evidence>
<organism>
    <name type="scientific">Rhizobium leguminosarum bv. trifolii (strain WSM2304)</name>
    <dbReference type="NCBI Taxonomy" id="395492"/>
    <lineage>
        <taxon>Bacteria</taxon>
        <taxon>Pseudomonadati</taxon>
        <taxon>Pseudomonadota</taxon>
        <taxon>Alphaproteobacteria</taxon>
        <taxon>Hyphomicrobiales</taxon>
        <taxon>Rhizobiaceae</taxon>
        <taxon>Rhizobium/Agrobacterium group</taxon>
        <taxon>Rhizobium</taxon>
    </lineage>
</organism>
<keyword id="KW-0067">ATP-binding</keyword>
<keyword id="KW-0436">Ligase</keyword>
<keyword id="KW-0460">Magnesium</keyword>
<keyword id="KW-0479">Metal-binding</keyword>
<keyword id="KW-0547">Nucleotide-binding</keyword>
<keyword id="KW-1185">Reference proteome</keyword>
<keyword id="KW-0816">Tricarboxylic acid cycle</keyword>
<accession>B5ZSR9</accession>
<sequence length="397" mass="41692">MNIHEYQAKALLKGYGAPVAEGVAILKVEEAAAAAKSLPGPLYVVKSQIHAGGRGKGKFKELSPEAKGGVRLAKSIEEVVAHAKEMLGNTLVTAQTGDAGKQVNRLYIEDGADIARELYCSILVDRSVGRVAFVVSTEGGMDIEAVAHDTPEKIQTIAIDPEAGVTAADVAAISKALQLDGAAAEDAKSLFPALYKAFNEKDMALLEVNPLIVMKDGHLRVLDAKMSFDGNALFRHDDVKTLRDETEEDAKEIEASKWDLAYVALDGNIGCMVNGAGLAMATMDIIKLYGKEPANFCDVGGGAGKEKVAAAFKIITADPKVEGILVNIFGGIMKCDVIAEGVIAAVKEVGLKVPLVVRLEGTNVELGKKILNESGLAITAADDLDDAAKKIVAAING</sequence>
<feature type="chain" id="PRO_1000129217" description="Succinate--CoA ligase [ADP-forming] subunit beta">
    <location>
        <begin position="1"/>
        <end position="397"/>
    </location>
</feature>
<feature type="domain" description="ATP-grasp" evidence="1">
    <location>
        <begin position="9"/>
        <end position="254"/>
    </location>
</feature>
<feature type="binding site" evidence="1">
    <location>
        <position position="46"/>
    </location>
    <ligand>
        <name>ATP</name>
        <dbReference type="ChEBI" id="CHEBI:30616"/>
    </ligand>
</feature>
<feature type="binding site" evidence="1">
    <location>
        <begin position="53"/>
        <end position="55"/>
    </location>
    <ligand>
        <name>ATP</name>
        <dbReference type="ChEBI" id="CHEBI:30616"/>
    </ligand>
</feature>
<feature type="binding site" evidence="1">
    <location>
        <position position="109"/>
    </location>
    <ligand>
        <name>ATP</name>
        <dbReference type="ChEBI" id="CHEBI:30616"/>
    </ligand>
</feature>
<feature type="binding site" evidence="1">
    <location>
        <position position="112"/>
    </location>
    <ligand>
        <name>ATP</name>
        <dbReference type="ChEBI" id="CHEBI:30616"/>
    </ligand>
</feature>
<feature type="binding site" evidence="1">
    <location>
        <position position="117"/>
    </location>
    <ligand>
        <name>ATP</name>
        <dbReference type="ChEBI" id="CHEBI:30616"/>
    </ligand>
</feature>
<feature type="binding site" evidence="1">
    <location>
        <position position="209"/>
    </location>
    <ligand>
        <name>Mg(2+)</name>
        <dbReference type="ChEBI" id="CHEBI:18420"/>
    </ligand>
</feature>
<feature type="binding site" evidence="1">
    <location>
        <position position="223"/>
    </location>
    <ligand>
        <name>Mg(2+)</name>
        <dbReference type="ChEBI" id="CHEBI:18420"/>
    </ligand>
</feature>
<feature type="binding site" evidence="1">
    <location>
        <position position="274"/>
    </location>
    <ligand>
        <name>substrate</name>
        <note>ligand shared with subunit alpha</note>
    </ligand>
</feature>
<feature type="binding site" evidence="1">
    <location>
        <begin position="331"/>
        <end position="333"/>
    </location>
    <ligand>
        <name>substrate</name>
        <note>ligand shared with subunit alpha</note>
    </ligand>
</feature>
<proteinExistence type="inferred from homology"/>
<reference key="1">
    <citation type="journal article" date="2010" name="Stand. Genomic Sci.">
        <title>Complete genome sequence of Rhizobium leguminosarum bv trifolii strain WSM2304, an effective microsymbiont of the South American clover Trifolium polymorphum.</title>
        <authorList>
            <person name="Reeve W."/>
            <person name="O'Hara G."/>
            <person name="Chain P."/>
            <person name="Ardley J."/>
            <person name="Brau L."/>
            <person name="Nandesena K."/>
            <person name="Tiwari R."/>
            <person name="Malfatti S."/>
            <person name="Kiss H."/>
            <person name="Lapidus A."/>
            <person name="Copeland A."/>
            <person name="Nolan M."/>
            <person name="Land M."/>
            <person name="Ivanova N."/>
            <person name="Mavromatis K."/>
            <person name="Markowitz V."/>
            <person name="Kyrpides N."/>
            <person name="Melino V."/>
            <person name="Denton M."/>
            <person name="Yates R."/>
            <person name="Howieson J."/>
        </authorList>
    </citation>
    <scope>NUCLEOTIDE SEQUENCE [LARGE SCALE GENOMIC DNA]</scope>
    <source>
        <strain>WSM2304</strain>
    </source>
</reference>
<protein>
    <recommendedName>
        <fullName evidence="1">Succinate--CoA ligase [ADP-forming] subunit beta</fullName>
        <ecNumber evidence="1">6.2.1.5</ecNumber>
    </recommendedName>
    <alternativeName>
        <fullName evidence="1">Succinyl-CoA synthetase subunit beta</fullName>
        <shortName evidence="1">SCS-beta</shortName>
    </alternativeName>
</protein>
<name>SUCC_RHILW</name>